<gene>
    <name type="ordered locus">sll0793</name>
</gene>
<evidence type="ECO:0000255" key="1">
    <source>
        <dbReference type="HAMAP-Rule" id="MF_00010"/>
    </source>
</evidence>
<keyword id="KW-0997">Cell inner membrane</keyword>
<keyword id="KW-1003">Cell membrane</keyword>
<keyword id="KW-0472">Membrane</keyword>
<keyword id="KW-1185">Reference proteome</keyword>
<keyword id="KW-0812">Transmembrane</keyword>
<keyword id="KW-1133">Transmembrane helix</keyword>
<sequence length="108" mass="11998">MILRSLLYFVMAGLCEIGGGYLVWLWIREGKSVWLALVRAILLTVYGFVATLQPANFGRAYAAYGGIFIILSIIWGWQVDNVVVDRLDWLGAAIALVGVLVMMYANRA</sequence>
<accession>Q55939</accession>
<proteinExistence type="inferred from homology"/>
<dbReference type="EMBL" id="BA000022">
    <property type="protein sequence ID" value="BAA10705.1"/>
    <property type="molecule type" value="Genomic_DNA"/>
</dbReference>
<dbReference type="PIR" id="S77013">
    <property type="entry name" value="S77013"/>
</dbReference>
<dbReference type="SMR" id="Q55939"/>
<dbReference type="FunCoup" id="Q55939">
    <property type="interactions" value="6"/>
</dbReference>
<dbReference type="STRING" id="1148.gene:10500209"/>
<dbReference type="PaxDb" id="1148-1001824"/>
<dbReference type="EnsemblBacteria" id="BAA10705">
    <property type="protein sequence ID" value="BAA10705"/>
    <property type="gene ID" value="BAA10705"/>
</dbReference>
<dbReference type="KEGG" id="syn:sll0793"/>
<dbReference type="eggNOG" id="COG1742">
    <property type="taxonomic scope" value="Bacteria"/>
</dbReference>
<dbReference type="InParanoid" id="Q55939"/>
<dbReference type="PhylomeDB" id="Q55939"/>
<dbReference type="Proteomes" id="UP000001425">
    <property type="component" value="Chromosome"/>
</dbReference>
<dbReference type="GO" id="GO:0005886">
    <property type="term" value="C:plasma membrane"/>
    <property type="evidence" value="ECO:0000318"/>
    <property type="project" value="GO_Central"/>
</dbReference>
<dbReference type="Gene3D" id="1.10.3730.20">
    <property type="match status" value="1"/>
</dbReference>
<dbReference type="HAMAP" id="MF_00010">
    <property type="entry name" value="UPF0060"/>
    <property type="match status" value="1"/>
</dbReference>
<dbReference type="InterPro" id="IPR003844">
    <property type="entry name" value="UPF0060"/>
</dbReference>
<dbReference type="NCBIfam" id="NF002586">
    <property type="entry name" value="PRK02237.1"/>
    <property type="match status" value="1"/>
</dbReference>
<dbReference type="PANTHER" id="PTHR36116">
    <property type="entry name" value="UPF0060 MEMBRANE PROTEIN YNFA"/>
    <property type="match status" value="1"/>
</dbReference>
<dbReference type="PANTHER" id="PTHR36116:SF1">
    <property type="entry name" value="UPF0060 MEMBRANE PROTEIN YNFA"/>
    <property type="match status" value="1"/>
</dbReference>
<dbReference type="Pfam" id="PF02694">
    <property type="entry name" value="UPF0060"/>
    <property type="match status" value="1"/>
</dbReference>
<dbReference type="SUPFAM" id="SSF103481">
    <property type="entry name" value="Multidrug resistance efflux transporter EmrE"/>
    <property type="match status" value="1"/>
</dbReference>
<comment type="subcellular location">
    <subcellularLocation>
        <location evidence="1">Cell inner membrane</location>
        <topology evidence="1">Multi-pass membrane protein</topology>
    </subcellularLocation>
</comment>
<comment type="similarity">
    <text evidence="1">Belongs to the UPF0060 family.</text>
</comment>
<reference key="1">
    <citation type="journal article" date="1995" name="DNA Res.">
        <title>Sequence analysis of the genome of the unicellular cyanobacterium Synechocystis sp. strain PCC6803. I. Sequence features in the 1 Mb region from map positions 64% to 92% of the genome.</title>
        <authorList>
            <person name="Kaneko T."/>
            <person name="Tanaka A."/>
            <person name="Sato S."/>
            <person name="Kotani H."/>
            <person name="Sazuka T."/>
            <person name="Miyajima N."/>
            <person name="Sugiura M."/>
            <person name="Tabata S."/>
        </authorList>
    </citation>
    <scope>NUCLEOTIDE SEQUENCE [LARGE SCALE GENOMIC DNA]</scope>
    <source>
        <strain>ATCC 27184 / PCC 6803 / N-1</strain>
    </source>
</reference>
<reference key="2">
    <citation type="journal article" date="1996" name="DNA Res.">
        <title>Sequence analysis of the genome of the unicellular cyanobacterium Synechocystis sp. strain PCC6803. II. Sequence determination of the entire genome and assignment of potential protein-coding regions.</title>
        <authorList>
            <person name="Kaneko T."/>
            <person name="Sato S."/>
            <person name="Kotani H."/>
            <person name="Tanaka A."/>
            <person name="Asamizu E."/>
            <person name="Nakamura Y."/>
            <person name="Miyajima N."/>
            <person name="Hirosawa M."/>
            <person name="Sugiura M."/>
            <person name="Sasamoto S."/>
            <person name="Kimura T."/>
            <person name="Hosouchi T."/>
            <person name="Matsuno A."/>
            <person name="Muraki A."/>
            <person name="Nakazaki N."/>
            <person name="Naruo K."/>
            <person name="Okumura S."/>
            <person name="Shimpo S."/>
            <person name="Takeuchi C."/>
            <person name="Wada T."/>
            <person name="Watanabe A."/>
            <person name="Yamada M."/>
            <person name="Yasuda M."/>
            <person name="Tabata S."/>
        </authorList>
    </citation>
    <scope>NUCLEOTIDE SEQUENCE [LARGE SCALE GENOMIC DNA]</scope>
    <source>
        <strain>ATCC 27184 / PCC 6803 / Kazusa</strain>
    </source>
</reference>
<organism>
    <name type="scientific">Synechocystis sp. (strain ATCC 27184 / PCC 6803 / Kazusa)</name>
    <dbReference type="NCBI Taxonomy" id="1111708"/>
    <lineage>
        <taxon>Bacteria</taxon>
        <taxon>Bacillati</taxon>
        <taxon>Cyanobacteriota</taxon>
        <taxon>Cyanophyceae</taxon>
        <taxon>Synechococcales</taxon>
        <taxon>Merismopediaceae</taxon>
        <taxon>Synechocystis</taxon>
    </lineage>
</organism>
<name>Y793_SYNY3</name>
<protein>
    <recommendedName>
        <fullName evidence="1">UPF0060 membrane protein sll0793</fullName>
    </recommendedName>
</protein>
<feature type="chain" id="PRO_0000162354" description="UPF0060 membrane protein sll0793">
    <location>
        <begin position="1"/>
        <end position="108"/>
    </location>
</feature>
<feature type="transmembrane region" description="Helical" evidence="1">
    <location>
        <begin position="7"/>
        <end position="27"/>
    </location>
</feature>
<feature type="transmembrane region" description="Helical" evidence="1">
    <location>
        <begin position="32"/>
        <end position="52"/>
    </location>
</feature>
<feature type="transmembrane region" description="Helical" evidence="1">
    <location>
        <begin position="64"/>
        <end position="84"/>
    </location>
</feature>
<feature type="transmembrane region" description="Helical" evidence="1">
    <location>
        <begin position="86"/>
        <end position="106"/>
    </location>
</feature>